<protein>
    <recommendedName>
        <fullName>Uncharacterized protein Rv2901c</fullName>
    </recommendedName>
</protein>
<reference key="1">
    <citation type="journal article" date="1998" name="Nature">
        <title>Deciphering the biology of Mycobacterium tuberculosis from the complete genome sequence.</title>
        <authorList>
            <person name="Cole S.T."/>
            <person name="Brosch R."/>
            <person name="Parkhill J."/>
            <person name="Garnier T."/>
            <person name="Churcher C.M."/>
            <person name="Harris D.E."/>
            <person name="Gordon S.V."/>
            <person name="Eiglmeier K."/>
            <person name="Gas S."/>
            <person name="Barry C.E. III"/>
            <person name="Tekaia F."/>
            <person name="Badcock K."/>
            <person name="Basham D."/>
            <person name="Brown D."/>
            <person name="Chillingworth T."/>
            <person name="Connor R."/>
            <person name="Davies R.M."/>
            <person name="Devlin K."/>
            <person name="Feltwell T."/>
            <person name="Gentles S."/>
            <person name="Hamlin N."/>
            <person name="Holroyd S."/>
            <person name="Hornsby T."/>
            <person name="Jagels K."/>
            <person name="Krogh A."/>
            <person name="McLean J."/>
            <person name="Moule S."/>
            <person name="Murphy L.D."/>
            <person name="Oliver S."/>
            <person name="Osborne J."/>
            <person name="Quail M.A."/>
            <person name="Rajandream M.A."/>
            <person name="Rogers J."/>
            <person name="Rutter S."/>
            <person name="Seeger K."/>
            <person name="Skelton S."/>
            <person name="Squares S."/>
            <person name="Squares R."/>
            <person name="Sulston J.E."/>
            <person name="Taylor K."/>
            <person name="Whitehead S."/>
            <person name="Barrell B.G."/>
        </authorList>
    </citation>
    <scope>NUCLEOTIDE SEQUENCE [LARGE SCALE GENOMIC DNA]</scope>
    <source>
        <strain>ATCC 25618 / H37Rv</strain>
    </source>
</reference>
<reference key="2">
    <citation type="journal article" date="2011" name="Mol. Cell. Proteomics">
        <title>Proteogenomic analysis of Mycobacterium tuberculosis by high resolution mass spectrometry.</title>
        <authorList>
            <person name="Kelkar D.S."/>
            <person name="Kumar D."/>
            <person name="Kumar P."/>
            <person name="Balakrishnan L."/>
            <person name="Muthusamy B."/>
            <person name="Yadav A.K."/>
            <person name="Shrivastava P."/>
            <person name="Marimuthu A."/>
            <person name="Anand S."/>
            <person name="Sundaram H."/>
            <person name="Kingsbury R."/>
            <person name="Harsha H.C."/>
            <person name="Nair B."/>
            <person name="Prasad T.S."/>
            <person name="Chauhan D.S."/>
            <person name="Katoch K."/>
            <person name="Katoch V.M."/>
            <person name="Kumar P."/>
            <person name="Chaerkady R."/>
            <person name="Ramachandran S."/>
            <person name="Dash D."/>
            <person name="Pandey A."/>
        </authorList>
    </citation>
    <scope>ACETYLATION [LARGE SCALE ANALYSIS] AT SER-2</scope>
    <scope>CLEAVAGE OF INITIATOR METHIONINE [LARGE SCALE ANALYSIS]</scope>
    <scope>IDENTIFICATION BY MASS SPECTROMETRY [LARGE SCALE ANALYSIS]</scope>
    <source>
        <strain>ATCC 25618 / H37Rv</strain>
    </source>
</reference>
<accession>P9WL27</accession>
<accession>L0TDQ0</accession>
<accession>P65051</accession>
<accession>Q10822</accession>
<feature type="initiator methionine" description="Removed" evidence="1">
    <location>
        <position position="1"/>
    </location>
</feature>
<feature type="chain" id="PRO_0000104096" description="Uncharacterized protein Rv2901c">
    <location>
        <begin position="2"/>
        <end position="101"/>
    </location>
</feature>
<feature type="modified residue" description="N-acetylserine" evidence="1">
    <location>
        <position position="2"/>
    </location>
</feature>
<keyword id="KW-0007">Acetylation</keyword>
<keyword id="KW-1185">Reference proteome</keyword>
<name>Y2901_MYCTU</name>
<evidence type="ECO:0007744" key="1">
    <source>
    </source>
</evidence>
<proteinExistence type="evidence at protein level"/>
<gene>
    <name type="ordered locus">Rv2901c</name>
    <name type="ORF">MTCY274.32c</name>
</gene>
<sequence>MSAEDLEKYETEMELSLYREYKDIVGQFSYVVETERRFYLANSVEMVPRNTDGEVYFELRLADAWVWDMYRPARFVKQVRVVTFKDVNIEEVEKPELRLPE</sequence>
<dbReference type="EMBL" id="AL123456">
    <property type="protein sequence ID" value="CCP45703.1"/>
    <property type="molecule type" value="Genomic_DNA"/>
</dbReference>
<dbReference type="PIR" id="H70926">
    <property type="entry name" value="H70926"/>
</dbReference>
<dbReference type="RefSeq" id="NP_217417.1">
    <property type="nucleotide sequence ID" value="NC_000962.3"/>
</dbReference>
<dbReference type="RefSeq" id="WP_003414710.1">
    <property type="nucleotide sequence ID" value="NZ_NVQJ01000006.1"/>
</dbReference>
<dbReference type="STRING" id="83332.Rv2901c"/>
<dbReference type="iPTMnet" id="P9WL27"/>
<dbReference type="PaxDb" id="83332-Rv2901c"/>
<dbReference type="DNASU" id="888605"/>
<dbReference type="GeneID" id="888605"/>
<dbReference type="KEGG" id="mtu:Rv2901c"/>
<dbReference type="KEGG" id="mtv:RVBD_2901c"/>
<dbReference type="TubercuList" id="Rv2901c"/>
<dbReference type="eggNOG" id="ENOG503161G">
    <property type="taxonomic scope" value="Bacteria"/>
</dbReference>
<dbReference type="InParanoid" id="P9WL27"/>
<dbReference type="OrthoDB" id="3213600at2"/>
<dbReference type="PhylomeDB" id="P9WL27"/>
<dbReference type="Proteomes" id="UP000001584">
    <property type="component" value="Chromosome"/>
</dbReference>
<dbReference type="GO" id="GO:0005886">
    <property type="term" value="C:plasma membrane"/>
    <property type="evidence" value="ECO:0007005"/>
    <property type="project" value="MTBBASE"/>
</dbReference>
<dbReference type="InterPro" id="IPR019592">
    <property type="entry name" value="DUF2469"/>
</dbReference>
<dbReference type="Pfam" id="PF10611">
    <property type="entry name" value="DUF2469"/>
    <property type="match status" value="1"/>
</dbReference>
<organism>
    <name type="scientific">Mycobacterium tuberculosis (strain ATCC 25618 / H37Rv)</name>
    <dbReference type="NCBI Taxonomy" id="83332"/>
    <lineage>
        <taxon>Bacteria</taxon>
        <taxon>Bacillati</taxon>
        <taxon>Actinomycetota</taxon>
        <taxon>Actinomycetes</taxon>
        <taxon>Mycobacteriales</taxon>
        <taxon>Mycobacteriaceae</taxon>
        <taxon>Mycobacterium</taxon>
        <taxon>Mycobacterium tuberculosis complex</taxon>
    </lineage>
</organism>